<organismHost>
    <name type="scientific">Canis lupus familiaris</name>
    <name type="common">Dog</name>
    <name type="synonym">Canis familiaris</name>
    <dbReference type="NCBI Taxonomy" id="9615"/>
</organismHost>
<gene>
    <name evidence="1" type="primary">L4</name>
</gene>
<dbReference type="EMBL" id="S38212">
    <property type="protein sequence ID" value="AAB22306.1"/>
    <property type="molecule type" value="Genomic_DNA"/>
</dbReference>
<dbReference type="PIR" id="D45574">
    <property type="entry name" value="D45574"/>
</dbReference>
<dbReference type="RefSeq" id="AP_000628.1">
    <property type="nucleotide sequence ID" value="AC_000020.1"/>
</dbReference>
<dbReference type="SMR" id="P68963"/>
<dbReference type="GO" id="GO:0042025">
    <property type="term" value="C:host cell nucleus"/>
    <property type="evidence" value="ECO:0007669"/>
    <property type="project" value="UniProtKB-SubCell"/>
</dbReference>
<dbReference type="GO" id="GO:0019028">
    <property type="term" value="C:viral capsid"/>
    <property type="evidence" value="ECO:0007669"/>
    <property type="project" value="UniProtKB-UniRule"/>
</dbReference>
<dbReference type="GO" id="GO:0031423">
    <property type="term" value="F:hexon binding"/>
    <property type="evidence" value="ECO:0007669"/>
    <property type="project" value="InterPro"/>
</dbReference>
<dbReference type="Gene3D" id="6.10.250.1460">
    <property type="match status" value="1"/>
</dbReference>
<dbReference type="HAMAP" id="MF_04049">
    <property type="entry name" value="ADV_CAP8"/>
    <property type="match status" value="1"/>
</dbReference>
<dbReference type="InterPro" id="IPR000646">
    <property type="entry name" value="Adeno_PVIII"/>
</dbReference>
<dbReference type="Pfam" id="PF01310">
    <property type="entry name" value="Adeno_PVIII"/>
    <property type="match status" value="1"/>
</dbReference>
<keyword id="KW-0167">Capsid protein</keyword>
<keyword id="KW-1048">Host nucleus</keyword>
<keyword id="KW-0426">Late protein</keyword>
<keyword id="KW-0597">Phosphoprotein</keyword>
<keyword id="KW-0946">Virion</keyword>
<reference key="1">
    <citation type="journal article" date="1992" name="Virus Res.">
        <title>Differences in the E3 regions of the canine adenovirus type 1 and type 2.</title>
        <authorList>
            <person name="Linne T."/>
        </authorList>
    </citation>
    <scope>NUCLEOTIDE SEQUENCE [GENOMIC DNA]</scope>
</reference>
<proteinExistence type="inferred from homology"/>
<comment type="function">
    <molecule>Hexon-linking protein-N</molecule>
    <text evidence="1">Structural component of the virion that acts as a cement protein on the capsid interior and which glue the peripentonal hexons and group-of-nine hexons together.</text>
</comment>
<comment type="function">
    <molecule>Hexon-linking protein-C</molecule>
    <text evidence="1">Structural component of the virion that acts as a cement protein on the capsid interior and which glue the peripentonal hexons and group-of-nine hexons together.</text>
</comment>
<comment type="subunit">
    <text evidence="1">Interacts with the peripentonal hexons as well as the hexons in the facets. Part of a complex composed of the core-capsid bridging protein, the endosome lysis protein VI and the hexon-linking protein VIII; these interactions bridge the virus core to the capsid.</text>
</comment>
<comment type="subcellular location">
    <molecule>Hexon-linking protein-C</molecule>
    <subcellularLocation>
        <location evidence="1">Virion</location>
    </subcellularLocation>
    <text evidence="1">Located on the inner side of the capsid shell. Present in 120 copies per virion.</text>
</comment>
<comment type="subcellular location">
    <molecule>Pre-hexon-linking protein VIII</molecule>
    <subcellularLocation>
        <location evidence="1">Host nucleus</location>
    </subcellularLocation>
</comment>
<comment type="subcellular location">
    <molecule>Hexon-linking protein-N</molecule>
    <subcellularLocation>
        <location evidence="1">Virion</location>
    </subcellularLocation>
    <text evidence="1">Located on the inner side of the capsid shell. Present in 120 copies per virion.</text>
</comment>
<comment type="induction">
    <text evidence="1">Expressed in the late phase of the viral replicative cycle.</text>
</comment>
<comment type="PTM">
    <text evidence="1">Cleaved by the viral protease during virion maturation. May cause the middle segment to be shed from the capsid.</text>
</comment>
<comment type="miscellaneous">
    <text evidence="1">All late proteins expressed from the major late promoter are produced by alternative splicing and alternative polyadenylation of the same gene giving rise to non-overlapping ORFs. A leader sequence is present in the N-terminus of all these mRNAs and is recognized by the viral shutoff protein to provide expression although conventional translation via ribosome scanning from the cap has been shut off in the host cell.</text>
</comment>
<comment type="similarity">
    <text evidence="1 2">Belongs to the adenoviridae hexon-linking protein family.</text>
</comment>
<name>CAP8_ADECU</name>
<feature type="chain" id="PRO_0000421416" description="Pre-hexon-linking protein VIII" evidence="1">
    <location>
        <begin position="1"/>
        <end position="224"/>
    </location>
</feature>
<feature type="peptide" id="PRO_0000421417" description="Hexon-linking protein-N" evidence="1">
    <location>
        <begin position="1"/>
        <end position="111"/>
    </location>
</feature>
<feature type="propeptide" id="PRO_0000036509" evidence="1">
    <location>
        <begin position="112"/>
        <end position="154"/>
    </location>
</feature>
<feature type="peptide" id="PRO_0000036510" description="Hexon-linking protein-C" evidence="1">
    <location>
        <begin position="155"/>
        <end position="224"/>
    </location>
</feature>
<feature type="site" description="Cleavage; by viral protease" evidence="1">
    <location>
        <begin position="111"/>
        <end position="112"/>
    </location>
</feature>
<feature type="site" description="Cleavage; by viral protease" evidence="1">
    <location>
        <begin position="154"/>
        <end position="155"/>
    </location>
</feature>
<feature type="modified residue" description="Phosphothreonine; by host" evidence="1">
    <location>
        <position position="64"/>
    </location>
</feature>
<protein>
    <recommendedName>
        <fullName evidence="1">Pre-hexon-linking protein VIII</fullName>
    </recommendedName>
    <alternativeName>
        <fullName evidence="1">Pre-protein VIII</fullName>
        <shortName evidence="1">pVIII</shortName>
    </alternativeName>
    <component>
        <recommendedName>
            <fullName evidence="1">Hexon-linking protein-N</fullName>
        </recommendedName>
        <alternativeName>
            <fullName evidence="1">12.1 kDa protein VIII</fullName>
        </alternativeName>
        <alternativeName>
            <fullName evidence="1">Protein VIII-N</fullName>
        </alternativeName>
    </component>
    <component>
        <recommendedName>
            <fullName evidence="1">Hexon-linking protein-C</fullName>
        </recommendedName>
        <alternativeName>
            <fullName evidence="1">7.6 kDa protein VIII</fullName>
        </alternativeName>
        <alternativeName>
            <fullName evidence="1">Protein VIII-C</fullName>
        </alternativeName>
    </component>
</protein>
<evidence type="ECO:0000255" key="1">
    <source>
        <dbReference type="HAMAP-Rule" id="MF_04049"/>
    </source>
</evidence>
<evidence type="ECO:0000305" key="2"/>
<accession>P68963</accession>
<accession>Q90097</accession>
<sequence length="224" mass="24328">MSKEIPTPYMWSYQPQTGHAAGASQDYSTQMNWFSAGPSMISQVYGIRDLRNKVLITQAEITKTPRTIMDPPIWPAAMLVQEAAPPKTVTLPRNHTLEQAMTNSGAQLAGGRQLCPSQIGIKSPVLAGTGIQLSEDIPSASWIRPDGIFQLGGGSRSSFSPTQAFLTLQQASSTPRAGGVGTYQFVREFVPEVYLNPFSGPPDTFPDQFIPNYDIVTNSVDGYD</sequence>
<organism>
    <name type="scientific">Canine adenovirus serotype 1 (strain Utrecht)</name>
    <name type="common">CAdV-1</name>
    <name type="synonym">Canine adenovirus 1 (strain Utrecht)</name>
    <dbReference type="NCBI Taxonomy" id="36364"/>
    <lineage>
        <taxon>Viruses</taxon>
        <taxon>Varidnaviria</taxon>
        <taxon>Bamfordvirae</taxon>
        <taxon>Preplasmiviricota</taxon>
        <taxon>Tectiliviricetes</taxon>
        <taxon>Rowavirales</taxon>
        <taxon>Adenoviridae</taxon>
        <taxon>Mastadenovirus</taxon>
        <taxon>Canine mastadenovirus A</taxon>
    </lineage>
</organism>